<organism>
    <name type="scientific">Methanocaldococcus jannaschii (strain ATCC 43067 / DSM 2661 / JAL-1 / JCM 10045 / NBRC 100440)</name>
    <name type="common">Methanococcus jannaschii</name>
    <dbReference type="NCBI Taxonomy" id="243232"/>
    <lineage>
        <taxon>Archaea</taxon>
        <taxon>Methanobacteriati</taxon>
        <taxon>Methanobacteriota</taxon>
        <taxon>Methanomada group</taxon>
        <taxon>Methanococci</taxon>
        <taxon>Methanococcales</taxon>
        <taxon>Methanocaldococcaceae</taxon>
        <taxon>Methanocaldococcus</taxon>
    </lineage>
</organism>
<keyword id="KW-0472">Membrane</keyword>
<keyword id="KW-1185">Reference proteome</keyword>
<keyword id="KW-0812">Transmembrane</keyword>
<keyword id="KW-1133">Transmembrane helix</keyword>
<proteinExistence type="predicted"/>
<evidence type="ECO:0000255" key="1"/>
<evidence type="ECO:0000305" key="2"/>
<sequence>MVVLFLIWSHVNVVVSDSMYPIMKRGDLVIVENAGFEFNPNDVDVGDIVVYKAHWPYYQYLLSEIDYKLNLNPYTTLYIFKEGDFKDMSVKVLGEIKTDKSSYKILEADIPKSPTKPVIHRVIDKVEFNNKTYFIIKGDNNPIHDPELVSINQIKQRVIVVDGHPLVIPYVGYLSIWLKEYWYLVVLFVLIYYAYNYLKGGRK</sequence>
<gene>
    <name type="ordered locus">MJ0260</name>
</gene>
<name>Y260_METJA</name>
<protein>
    <recommendedName>
        <fullName>Uncharacterized protein MJ0260</fullName>
    </recommendedName>
</protein>
<reference key="1">
    <citation type="journal article" date="1996" name="Science">
        <title>Complete genome sequence of the methanogenic archaeon, Methanococcus jannaschii.</title>
        <authorList>
            <person name="Bult C.J."/>
            <person name="White O."/>
            <person name="Olsen G.J."/>
            <person name="Zhou L."/>
            <person name="Fleischmann R.D."/>
            <person name="Sutton G.G."/>
            <person name="Blake J.A."/>
            <person name="FitzGerald L.M."/>
            <person name="Clayton R.A."/>
            <person name="Gocayne J.D."/>
            <person name="Kerlavage A.R."/>
            <person name="Dougherty B.A."/>
            <person name="Tomb J.-F."/>
            <person name="Adams M.D."/>
            <person name="Reich C.I."/>
            <person name="Overbeek R."/>
            <person name="Kirkness E.F."/>
            <person name="Weinstock K.G."/>
            <person name="Merrick J.M."/>
            <person name="Glodek A."/>
            <person name="Scott J.L."/>
            <person name="Geoghagen N.S.M."/>
            <person name="Weidman J.F."/>
            <person name="Fuhrmann J.L."/>
            <person name="Nguyen D."/>
            <person name="Utterback T.R."/>
            <person name="Kelley J.M."/>
            <person name="Peterson J.D."/>
            <person name="Sadow P.W."/>
            <person name="Hanna M.C."/>
            <person name="Cotton M.D."/>
            <person name="Roberts K.M."/>
            <person name="Hurst M.A."/>
            <person name="Kaine B.P."/>
            <person name="Borodovsky M."/>
            <person name="Klenk H.-P."/>
            <person name="Fraser C.M."/>
            <person name="Smith H.O."/>
            <person name="Woese C.R."/>
            <person name="Venter J.C."/>
        </authorList>
    </citation>
    <scope>NUCLEOTIDE SEQUENCE [LARGE SCALE GENOMIC DNA]</scope>
    <source>
        <strain>ATCC 43067 / DSM 2661 / JAL-1 / JCM 10045 / NBRC 100440</strain>
    </source>
</reference>
<comment type="subcellular location">
    <subcellularLocation>
        <location evidence="2">Membrane</location>
        <topology evidence="2">Single-pass membrane protein</topology>
    </subcellularLocation>
</comment>
<accession>Q57708</accession>
<dbReference type="EMBL" id="L77117">
    <property type="protein sequence ID" value="AAB98246.1"/>
    <property type="molecule type" value="Genomic_DNA"/>
</dbReference>
<dbReference type="PIR" id="E64332">
    <property type="entry name" value="E64332"/>
</dbReference>
<dbReference type="FunCoup" id="Q57708">
    <property type="interactions" value="23"/>
</dbReference>
<dbReference type="STRING" id="243232.MJ_0260"/>
<dbReference type="PaxDb" id="243232-MJ_0260"/>
<dbReference type="EnsemblBacteria" id="AAB98246">
    <property type="protein sequence ID" value="AAB98246"/>
    <property type="gene ID" value="MJ_0260"/>
</dbReference>
<dbReference type="KEGG" id="mja:MJ_0260"/>
<dbReference type="eggNOG" id="arCOG01739">
    <property type="taxonomic scope" value="Archaea"/>
</dbReference>
<dbReference type="HOGENOM" id="CLU_118895_0_0_2"/>
<dbReference type="InParanoid" id="Q57708"/>
<dbReference type="OrthoDB" id="4822at2157"/>
<dbReference type="PhylomeDB" id="Q57708"/>
<dbReference type="Proteomes" id="UP000000805">
    <property type="component" value="Chromosome"/>
</dbReference>
<dbReference type="GO" id="GO:0016020">
    <property type="term" value="C:membrane"/>
    <property type="evidence" value="ECO:0007669"/>
    <property type="project" value="UniProtKB-SubCell"/>
</dbReference>
<dbReference type="GO" id="GO:0008233">
    <property type="term" value="F:peptidase activity"/>
    <property type="evidence" value="ECO:0000318"/>
    <property type="project" value="GO_Central"/>
</dbReference>
<dbReference type="GO" id="GO:0004252">
    <property type="term" value="F:serine-type endopeptidase activity"/>
    <property type="evidence" value="ECO:0007669"/>
    <property type="project" value="InterPro"/>
</dbReference>
<dbReference type="GO" id="GO:0006465">
    <property type="term" value="P:signal peptide processing"/>
    <property type="evidence" value="ECO:0007669"/>
    <property type="project" value="InterPro"/>
</dbReference>
<dbReference type="CDD" id="cd06530">
    <property type="entry name" value="S26_SPase_I"/>
    <property type="match status" value="1"/>
</dbReference>
<dbReference type="Gene3D" id="2.10.109.10">
    <property type="entry name" value="Umud Fragment, subunit A"/>
    <property type="match status" value="1"/>
</dbReference>
<dbReference type="InterPro" id="IPR036286">
    <property type="entry name" value="LexA/Signal_pep-like_sf"/>
</dbReference>
<dbReference type="InterPro" id="IPR019533">
    <property type="entry name" value="Peptidase_S26"/>
</dbReference>
<dbReference type="InterPro" id="IPR001733">
    <property type="entry name" value="Peptidase_S26B"/>
</dbReference>
<dbReference type="PANTHER" id="PTHR10806">
    <property type="entry name" value="SIGNAL PEPTIDASE COMPLEX CATALYTIC SUBUNIT SEC11"/>
    <property type="match status" value="1"/>
</dbReference>
<dbReference type="PANTHER" id="PTHR10806:SF6">
    <property type="entry name" value="SIGNAL PEPTIDASE COMPLEX CATALYTIC SUBUNIT SEC11"/>
    <property type="match status" value="1"/>
</dbReference>
<dbReference type="SUPFAM" id="SSF51306">
    <property type="entry name" value="LexA/Signal peptidase"/>
    <property type="match status" value="1"/>
</dbReference>
<feature type="chain" id="PRO_0000106762" description="Uncharacterized protein MJ0260">
    <location>
        <begin position="1"/>
        <end position="203"/>
    </location>
</feature>
<feature type="transmembrane region" description="Helical" evidence="1">
    <location>
        <begin position="171"/>
        <end position="191"/>
    </location>
</feature>